<dbReference type="EMBL" id="CP001638">
    <property type="protein sequence ID" value="ACS25944.1"/>
    <property type="molecule type" value="Genomic_DNA"/>
</dbReference>
<dbReference type="SMR" id="C5D991"/>
<dbReference type="STRING" id="471223.GWCH70_3304"/>
<dbReference type="KEGG" id="gwc:GWCH70_3304"/>
<dbReference type="eggNOG" id="COG0224">
    <property type="taxonomic scope" value="Bacteria"/>
</dbReference>
<dbReference type="HOGENOM" id="CLU_050669_0_1_9"/>
<dbReference type="OrthoDB" id="9812769at2"/>
<dbReference type="GO" id="GO:0005886">
    <property type="term" value="C:plasma membrane"/>
    <property type="evidence" value="ECO:0007669"/>
    <property type="project" value="UniProtKB-SubCell"/>
</dbReference>
<dbReference type="GO" id="GO:0045259">
    <property type="term" value="C:proton-transporting ATP synthase complex"/>
    <property type="evidence" value="ECO:0007669"/>
    <property type="project" value="UniProtKB-KW"/>
</dbReference>
<dbReference type="GO" id="GO:0005524">
    <property type="term" value="F:ATP binding"/>
    <property type="evidence" value="ECO:0007669"/>
    <property type="project" value="UniProtKB-UniRule"/>
</dbReference>
<dbReference type="GO" id="GO:0046933">
    <property type="term" value="F:proton-transporting ATP synthase activity, rotational mechanism"/>
    <property type="evidence" value="ECO:0007669"/>
    <property type="project" value="UniProtKB-UniRule"/>
</dbReference>
<dbReference type="GO" id="GO:0042777">
    <property type="term" value="P:proton motive force-driven plasma membrane ATP synthesis"/>
    <property type="evidence" value="ECO:0007669"/>
    <property type="project" value="UniProtKB-UniRule"/>
</dbReference>
<dbReference type="CDD" id="cd12151">
    <property type="entry name" value="F1-ATPase_gamma"/>
    <property type="match status" value="1"/>
</dbReference>
<dbReference type="FunFam" id="1.10.287.80:FF:000010">
    <property type="entry name" value="ATP synthase gamma chain"/>
    <property type="match status" value="1"/>
</dbReference>
<dbReference type="FunFam" id="3.40.1380.10:FF:000002">
    <property type="entry name" value="ATP synthase gamma chain"/>
    <property type="match status" value="1"/>
</dbReference>
<dbReference type="Gene3D" id="3.40.1380.10">
    <property type="match status" value="1"/>
</dbReference>
<dbReference type="Gene3D" id="1.10.287.80">
    <property type="entry name" value="ATP synthase, gamma subunit, helix hairpin domain"/>
    <property type="match status" value="1"/>
</dbReference>
<dbReference type="HAMAP" id="MF_00815">
    <property type="entry name" value="ATP_synth_gamma_bact"/>
    <property type="match status" value="1"/>
</dbReference>
<dbReference type="InterPro" id="IPR035968">
    <property type="entry name" value="ATP_synth_F1_ATPase_gsu"/>
</dbReference>
<dbReference type="InterPro" id="IPR000131">
    <property type="entry name" value="ATP_synth_F1_gsu"/>
</dbReference>
<dbReference type="InterPro" id="IPR023632">
    <property type="entry name" value="ATP_synth_F1_gsu_CS"/>
</dbReference>
<dbReference type="NCBIfam" id="TIGR01146">
    <property type="entry name" value="ATPsyn_F1gamma"/>
    <property type="match status" value="1"/>
</dbReference>
<dbReference type="NCBIfam" id="NF004147">
    <property type="entry name" value="PRK05621.2-1"/>
    <property type="match status" value="1"/>
</dbReference>
<dbReference type="PANTHER" id="PTHR11693">
    <property type="entry name" value="ATP SYNTHASE GAMMA CHAIN"/>
    <property type="match status" value="1"/>
</dbReference>
<dbReference type="PANTHER" id="PTHR11693:SF22">
    <property type="entry name" value="ATP SYNTHASE SUBUNIT GAMMA, MITOCHONDRIAL"/>
    <property type="match status" value="1"/>
</dbReference>
<dbReference type="Pfam" id="PF00231">
    <property type="entry name" value="ATP-synt"/>
    <property type="match status" value="1"/>
</dbReference>
<dbReference type="PRINTS" id="PR00126">
    <property type="entry name" value="ATPASEGAMMA"/>
</dbReference>
<dbReference type="SUPFAM" id="SSF52943">
    <property type="entry name" value="ATP synthase (F1-ATPase), gamma subunit"/>
    <property type="match status" value="1"/>
</dbReference>
<dbReference type="PROSITE" id="PS00153">
    <property type="entry name" value="ATPASE_GAMMA"/>
    <property type="match status" value="1"/>
</dbReference>
<proteinExistence type="inferred from homology"/>
<comment type="function">
    <text evidence="1">Produces ATP from ADP in the presence of a proton gradient across the membrane. The gamma chain is believed to be important in regulating ATPase activity and the flow of protons through the CF(0) complex.</text>
</comment>
<comment type="subunit">
    <text evidence="1">F-type ATPases have 2 components, CF(1) - the catalytic core - and CF(0) - the membrane proton channel. CF(1) has five subunits: alpha(3), beta(3), gamma(1), delta(1), epsilon(1). CF(0) has three main subunits: a, b and c.</text>
</comment>
<comment type="subcellular location">
    <subcellularLocation>
        <location evidence="1">Cell membrane</location>
        <topology evidence="1">Peripheral membrane protein</topology>
    </subcellularLocation>
</comment>
<comment type="similarity">
    <text evidence="1">Belongs to the ATPase gamma chain family.</text>
</comment>
<organism>
    <name type="scientific">Geobacillus sp. (strain WCH70)</name>
    <dbReference type="NCBI Taxonomy" id="471223"/>
    <lineage>
        <taxon>Bacteria</taxon>
        <taxon>Bacillati</taxon>
        <taxon>Bacillota</taxon>
        <taxon>Bacilli</taxon>
        <taxon>Bacillales</taxon>
        <taxon>Anoxybacillaceae</taxon>
        <taxon>Geobacillus</taxon>
    </lineage>
</organism>
<sequence length="285" mass="31824">MASLRDIKKRINATKKTSQITKAMEMVSASKLNRAEMNAKSFVPYMDKMQEVVANIALGAGNATHPMLVTRPVKKTGYLVITSDRGLAGAYNSNVLRTVYQTIQQRHQSPDEYAIIVIGRVGLSFFKKRNFPVILNITGLPDQPSFADIKEIANKAVGLFADGTFDELYMYYNHYVSAIQQEVTERKLLPLTDLVDNKQRTTYEFEPSQEEILDVLLPQYAESLIYGALLDAKASEHAARMTAMKNATDNAHELIRTLTLSYNRARQAAITQEITEIVAGANALQ</sequence>
<feature type="chain" id="PRO_1000213038" description="ATP synthase gamma chain">
    <location>
        <begin position="1"/>
        <end position="285"/>
    </location>
</feature>
<accession>C5D991</accession>
<protein>
    <recommendedName>
        <fullName evidence="1">ATP synthase gamma chain</fullName>
    </recommendedName>
    <alternativeName>
        <fullName evidence="1">ATP synthase F1 sector gamma subunit</fullName>
    </alternativeName>
    <alternativeName>
        <fullName evidence="1">F-ATPase gamma subunit</fullName>
    </alternativeName>
</protein>
<keyword id="KW-0066">ATP synthesis</keyword>
<keyword id="KW-1003">Cell membrane</keyword>
<keyword id="KW-0139">CF(1)</keyword>
<keyword id="KW-0375">Hydrogen ion transport</keyword>
<keyword id="KW-0406">Ion transport</keyword>
<keyword id="KW-0472">Membrane</keyword>
<keyword id="KW-0813">Transport</keyword>
<evidence type="ECO:0000255" key="1">
    <source>
        <dbReference type="HAMAP-Rule" id="MF_00815"/>
    </source>
</evidence>
<reference key="1">
    <citation type="submission" date="2009-06" db="EMBL/GenBank/DDBJ databases">
        <title>Complete sequence of chromosome of Geopacillus sp. WCH70.</title>
        <authorList>
            <consortium name="US DOE Joint Genome Institute"/>
            <person name="Lucas S."/>
            <person name="Copeland A."/>
            <person name="Lapidus A."/>
            <person name="Glavina del Rio T."/>
            <person name="Dalin E."/>
            <person name="Tice H."/>
            <person name="Bruce D."/>
            <person name="Goodwin L."/>
            <person name="Pitluck S."/>
            <person name="Chertkov O."/>
            <person name="Brettin T."/>
            <person name="Detter J.C."/>
            <person name="Han C."/>
            <person name="Larimer F."/>
            <person name="Land M."/>
            <person name="Hauser L."/>
            <person name="Kyrpides N."/>
            <person name="Mikhailova N."/>
            <person name="Brumm P."/>
            <person name="Mead D.A."/>
            <person name="Richardson P."/>
        </authorList>
    </citation>
    <scope>NUCLEOTIDE SEQUENCE [LARGE SCALE GENOMIC DNA]</scope>
    <source>
        <strain>WCH70</strain>
    </source>
</reference>
<gene>
    <name evidence="1" type="primary">atpG</name>
    <name type="ordered locus">GWCH70_3304</name>
</gene>
<name>ATPG_GEOSW</name>